<protein>
    <recommendedName>
        <fullName evidence="1">Large ribosomal subunit protein uL1</fullName>
    </recommendedName>
    <alternativeName>
        <fullName evidence="2">50S ribosomal protein L1</fullName>
    </alternativeName>
</protein>
<reference key="1">
    <citation type="journal article" date="2003" name="Proc. Natl. Acad. Sci. U.S.A.">
        <title>The genome of Nanoarchaeum equitans: insights into early archaeal evolution and derived parasitism.</title>
        <authorList>
            <person name="Waters E."/>
            <person name="Hohn M.J."/>
            <person name="Ahel I."/>
            <person name="Graham D.E."/>
            <person name="Adams M.D."/>
            <person name="Barnstead M."/>
            <person name="Beeson K.Y."/>
            <person name="Bibbs L."/>
            <person name="Bolanos R."/>
            <person name="Keller M."/>
            <person name="Kretz K."/>
            <person name="Lin X."/>
            <person name="Mathur E."/>
            <person name="Ni J."/>
            <person name="Podar M."/>
            <person name="Richardson T."/>
            <person name="Sutton G.G."/>
            <person name="Simon M."/>
            <person name="Soell D."/>
            <person name="Stetter K.O."/>
            <person name="Short J.M."/>
            <person name="Noorderwier M."/>
        </authorList>
    </citation>
    <scope>NUCLEOTIDE SEQUENCE [LARGE SCALE GENOMIC DNA]</scope>
    <source>
        <strain>Kin4-M</strain>
    </source>
</reference>
<evidence type="ECO:0000255" key="1">
    <source>
        <dbReference type="HAMAP-Rule" id="MF_01318"/>
    </source>
</evidence>
<evidence type="ECO:0000305" key="2"/>
<gene>
    <name evidence="1" type="primary">rpl1</name>
    <name type="ordered locus">NEQ546</name>
</gene>
<name>RL1_NANEQ</name>
<sequence>MVSVDQVKKAREGKKRRFTQTFELIFNLKNVDLRKYRLSTYIVLPRGRGKKMPILAIVGPENKELAEKYFDIVLTREDLKQLDKRTAKKLAKRHYHVVAQADLMPELGKSLLGRFLGIRGKMPNPKAGQILPPNLNEKMLEALREKLNNTVRVNVKKHVTFGVPIGTEDMEDEAIAENADTVINEIISQLPQGKQNIDSVYLKLTMGPAVRVL</sequence>
<accession>Q74M51</accession>
<feature type="chain" id="PRO_0000307666" description="Large ribosomal subunit protein uL1">
    <location>
        <begin position="1"/>
        <end position="213"/>
    </location>
</feature>
<proteinExistence type="inferred from homology"/>
<comment type="function">
    <text evidence="1">Binds directly to 23S rRNA. Probably involved in E site tRNA release.</text>
</comment>
<comment type="function">
    <text evidence="1">Protein L1 is also a translational repressor protein, it controls the translation of its operon by binding to its mRNA.</text>
</comment>
<comment type="subunit">
    <text evidence="1">Part of the 50S ribosomal subunit.</text>
</comment>
<comment type="similarity">
    <text evidence="1">Belongs to the universal ribosomal protein uL1 family.</text>
</comment>
<keyword id="KW-1185">Reference proteome</keyword>
<keyword id="KW-0678">Repressor</keyword>
<keyword id="KW-0687">Ribonucleoprotein</keyword>
<keyword id="KW-0689">Ribosomal protein</keyword>
<keyword id="KW-0694">RNA-binding</keyword>
<keyword id="KW-0699">rRNA-binding</keyword>
<keyword id="KW-0810">Translation regulation</keyword>
<keyword id="KW-0820">tRNA-binding</keyword>
<organism>
    <name type="scientific">Nanoarchaeum equitans (strain Kin4-M)</name>
    <dbReference type="NCBI Taxonomy" id="228908"/>
    <lineage>
        <taxon>Archaea</taxon>
        <taxon>Nanobdellota</taxon>
        <taxon>Candidatus Nanoarchaeia</taxon>
        <taxon>Nanoarchaeales</taxon>
        <taxon>Nanoarchaeaceae</taxon>
        <taxon>Nanoarchaeum</taxon>
    </lineage>
</organism>
<dbReference type="EMBL" id="AE017199">
    <property type="protein sequence ID" value="AAR39387.1"/>
    <property type="molecule type" value="Genomic_DNA"/>
</dbReference>
<dbReference type="SMR" id="Q74M51"/>
<dbReference type="STRING" id="228908.NEQ546"/>
<dbReference type="EnsemblBacteria" id="AAR39387">
    <property type="protein sequence ID" value="AAR39387"/>
    <property type="gene ID" value="NEQ546"/>
</dbReference>
<dbReference type="KEGG" id="neq:NEQ546"/>
<dbReference type="PATRIC" id="fig|228908.8.peg.567"/>
<dbReference type="HOGENOM" id="CLU_062853_4_0_2"/>
<dbReference type="Proteomes" id="UP000000578">
    <property type="component" value="Chromosome"/>
</dbReference>
<dbReference type="GO" id="GO:0015934">
    <property type="term" value="C:large ribosomal subunit"/>
    <property type="evidence" value="ECO:0007669"/>
    <property type="project" value="InterPro"/>
</dbReference>
<dbReference type="GO" id="GO:0019843">
    <property type="term" value="F:rRNA binding"/>
    <property type="evidence" value="ECO:0007669"/>
    <property type="project" value="UniProtKB-UniRule"/>
</dbReference>
<dbReference type="GO" id="GO:0003735">
    <property type="term" value="F:structural constituent of ribosome"/>
    <property type="evidence" value="ECO:0007669"/>
    <property type="project" value="InterPro"/>
</dbReference>
<dbReference type="GO" id="GO:0000049">
    <property type="term" value="F:tRNA binding"/>
    <property type="evidence" value="ECO:0007669"/>
    <property type="project" value="UniProtKB-KW"/>
</dbReference>
<dbReference type="GO" id="GO:0006417">
    <property type="term" value="P:regulation of translation"/>
    <property type="evidence" value="ECO:0007669"/>
    <property type="project" value="UniProtKB-KW"/>
</dbReference>
<dbReference type="GO" id="GO:0006412">
    <property type="term" value="P:translation"/>
    <property type="evidence" value="ECO:0007669"/>
    <property type="project" value="UniProtKB-UniRule"/>
</dbReference>
<dbReference type="CDD" id="cd00403">
    <property type="entry name" value="Ribosomal_L1"/>
    <property type="match status" value="1"/>
</dbReference>
<dbReference type="Gene3D" id="3.30.190.20">
    <property type="match status" value="1"/>
</dbReference>
<dbReference type="Gene3D" id="3.40.50.790">
    <property type="match status" value="1"/>
</dbReference>
<dbReference type="HAMAP" id="MF_01318_A">
    <property type="entry name" value="Ribosomal_uL1_A"/>
    <property type="match status" value="1"/>
</dbReference>
<dbReference type="InterPro" id="IPR002143">
    <property type="entry name" value="Ribosomal_uL1"/>
</dbReference>
<dbReference type="InterPro" id="IPR023674">
    <property type="entry name" value="Ribosomal_uL1-like"/>
</dbReference>
<dbReference type="InterPro" id="IPR028364">
    <property type="entry name" value="Ribosomal_uL1/biogenesis"/>
</dbReference>
<dbReference type="InterPro" id="IPR016095">
    <property type="entry name" value="Ribosomal_uL1_3-a/b-sand"/>
</dbReference>
<dbReference type="InterPro" id="IPR023669">
    <property type="entry name" value="Ribosomal_uL1_arc"/>
</dbReference>
<dbReference type="NCBIfam" id="NF003244">
    <property type="entry name" value="PRK04203.1"/>
    <property type="match status" value="1"/>
</dbReference>
<dbReference type="PANTHER" id="PTHR36427">
    <property type="entry name" value="54S RIBOSOMAL PROTEIN L1, MITOCHONDRIAL"/>
    <property type="match status" value="1"/>
</dbReference>
<dbReference type="PANTHER" id="PTHR36427:SF3">
    <property type="entry name" value="LARGE RIBOSOMAL SUBUNIT PROTEIN UL1M"/>
    <property type="match status" value="1"/>
</dbReference>
<dbReference type="Pfam" id="PF00687">
    <property type="entry name" value="Ribosomal_L1"/>
    <property type="match status" value="1"/>
</dbReference>
<dbReference type="PIRSF" id="PIRSF002155">
    <property type="entry name" value="Ribosomal_L1"/>
    <property type="match status" value="1"/>
</dbReference>
<dbReference type="SUPFAM" id="SSF56808">
    <property type="entry name" value="Ribosomal protein L1"/>
    <property type="match status" value="1"/>
</dbReference>